<proteinExistence type="inferred from homology"/>
<reference key="1">
    <citation type="journal article" date="2002" name="Nucleic Acids Res.">
        <title>Genome sequence of Shigella flexneri 2a: insights into pathogenicity through comparison with genomes of Escherichia coli K12 and O157.</title>
        <authorList>
            <person name="Jin Q."/>
            <person name="Yuan Z."/>
            <person name="Xu J."/>
            <person name="Wang Y."/>
            <person name="Shen Y."/>
            <person name="Lu W."/>
            <person name="Wang J."/>
            <person name="Liu H."/>
            <person name="Yang J."/>
            <person name="Yang F."/>
            <person name="Zhang X."/>
            <person name="Zhang J."/>
            <person name="Yang G."/>
            <person name="Wu H."/>
            <person name="Qu D."/>
            <person name="Dong J."/>
            <person name="Sun L."/>
            <person name="Xue Y."/>
            <person name="Zhao A."/>
            <person name="Gao Y."/>
            <person name="Zhu J."/>
            <person name="Kan B."/>
            <person name="Ding K."/>
            <person name="Chen S."/>
            <person name="Cheng H."/>
            <person name="Yao Z."/>
            <person name="He B."/>
            <person name="Chen R."/>
            <person name="Ma D."/>
            <person name="Qiang B."/>
            <person name="Wen Y."/>
            <person name="Hou Y."/>
            <person name="Yu J."/>
        </authorList>
    </citation>
    <scope>NUCLEOTIDE SEQUENCE [LARGE SCALE GENOMIC DNA]</scope>
    <source>
        <strain>301 / Serotype 2a</strain>
    </source>
</reference>
<reference key="2">
    <citation type="journal article" date="2003" name="Infect. Immun.">
        <title>Complete genome sequence and comparative genomics of Shigella flexneri serotype 2a strain 2457T.</title>
        <authorList>
            <person name="Wei J."/>
            <person name="Goldberg M.B."/>
            <person name="Burland V."/>
            <person name="Venkatesan M.M."/>
            <person name="Deng W."/>
            <person name="Fournier G."/>
            <person name="Mayhew G.F."/>
            <person name="Plunkett G. III"/>
            <person name="Rose D.J."/>
            <person name="Darling A."/>
            <person name="Mau B."/>
            <person name="Perna N.T."/>
            <person name="Payne S.M."/>
            <person name="Runyen-Janecky L.J."/>
            <person name="Zhou S."/>
            <person name="Schwartz D.C."/>
            <person name="Blattner F.R."/>
        </authorList>
    </citation>
    <scope>NUCLEOTIDE SEQUENCE [LARGE SCALE GENOMIC DNA]</scope>
    <source>
        <strain>ATCC 700930 / 2457T / Serotype 2a</strain>
    </source>
</reference>
<evidence type="ECO:0000255" key="1">
    <source>
        <dbReference type="HAMAP-Rule" id="MF_01463"/>
    </source>
</evidence>
<sequence>MLNRYPLWKYVMLIVVIVIGLLYALPNLFGEDPAVQITGARGVAASEQTLIQVQKTLQEEKITAKSVALEEGAILARFDSTDTQLRAREALMGVMGDKYVVALNLAPATPRWLAAIHAEPMKLGLDLRGGVHFLMEVDMDTALGKLQEQNIDSLRSDLREKGIPYTTVRKENNYGLSITFRDAKARDEAIAYLSKRHPDLVISSQGSNQLRAVMSDARLSEAREYAVQQNINILRNRVNQLGVAEPVVQRQGADRIVVELPGIQDTARAKEILGATATLEFRLVNTNVDQAAAASGRVPGDSEVKQTREGQPVVLYKRVILTGDHITDSTSSQDEYNQPQVNISLDSAGGNIMSNFTKDNIGKPMATLFVEYKDSGKKDANGRAVLVKQEEVINIANIQSRLGNSFRITGINNPNEARQLSLLLRAGALIAPIQIVEERTIGPTLGMQNIEQGLEACLAGLLVSILFMIIFYKKFGLIATSALIANLILIVGIMSLLPGATLSMPGIAGIVLTLAVAVDANVLINERIKEELSNGRTVQQAIDEGYRGAFSSIFDANITTLIKVIILYAVGTGAIKGFAITTGIGVATSMFTAIVGTRAIVNLLYGGKRVKKLSI</sequence>
<organism>
    <name type="scientific">Shigella flexneri</name>
    <dbReference type="NCBI Taxonomy" id="623"/>
    <lineage>
        <taxon>Bacteria</taxon>
        <taxon>Pseudomonadati</taxon>
        <taxon>Pseudomonadota</taxon>
        <taxon>Gammaproteobacteria</taxon>
        <taxon>Enterobacterales</taxon>
        <taxon>Enterobacteriaceae</taxon>
        <taxon>Shigella</taxon>
    </lineage>
</organism>
<protein>
    <recommendedName>
        <fullName evidence="1">Protein translocase subunit SecD</fullName>
    </recommendedName>
</protein>
<accession>P0AG92</accession>
<accession>P19673</accession>
<accession>P72348</accession>
<accession>P77531</accession>
<comment type="function">
    <text evidence="1">Part of the Sec protein translocase complex. Interacts with the SecYEG preprotein conducting channel. SecDF uses the proton motive force (PMF) to complete protein translocation after the ATP-dependent function of SecA.</text>
</comment>
<comment type="subunit">
    <text evidence="1">Forms a complex with SecF. Part of the essential Sec protein translocation apparatus which comprises SecA, SecYEG and auxiliary proteins SecDF-YajC and YidC.</text>
</comment>
<comment type="subcellular location">
    <subcellularLocation>
        <location evidence="1">Cell inner membrane</location>
        <topology evidence="1">Multi-pass membrane protein</topology>
    </subcellularLocation>
</comment>
<comment type="similarity">
    <text evidence="1">Belongs to the SecD/SecF family. SecD subfamily.</text>
</comment>
<keyword id="KW-0997">Cell inner membrane</keyword>
<keyword id="KW-1003">Cell membrane</keyword>
<keyword id="KW-0472">Membrane</keyword>
<keyword id="KW-0653">Protein transport</keyword>
<keyword id="KW-1185">Reference proteome</keyword>
<keyword id="KW-0811">Translocation</keyword>
<keyword id="KW-0812">Transmembrane</keyword>
<keyword id="KW-1133">Transmembrane helix</keyword>
<keyword id="KW-0813">Transport</keyword>
<gene>
    <name evidence="1" type="primary">secD</name>
    <name type="ordered locus">SF0345</name>
    <name type="ordered locus">S0353</name>
</gene>
<feature type="chain" id="PRO_0000095970" description="Protein translocase subunit SecD">
    <location>
        <begin position="1"/>
        <end position="615"/>
    </location>
</feature>
<feature type="transmembrane region" description="Helical" evidence="1">
    <location>
        <begin position="10"/>
        <end position="30"/>
    </location>
</feature>
<feature type="transmembrane region" description="Helical" evidence="1">
    <location>
        <begin position="452"/>
        <end position="472"/>
    </location>
</feature>
<feature type="transmembrane region" description="Helical" evidence="1">
    <location>
        <begin position="477"/>
        <end position="497"/>
    </location>
</feature>
<feature type="transmembrane region" description="Helical" evidence="1">
    <location>
        <begin position="504"/>
        <end position="524"/>
    </location>
</feature>
<feature type="transmembrane region" description="Helical" evidence="1">
    <location>
        <begin position="548"/>
        <end position="570"/>
    </location>
</feature>
<feature type="transmembrane region" description="Helical" evidence="1">
    <location>
        <begin position="585"/>
        <end position="605"/>
    </location>
</feature>
<dbReference type="EMBL" id="AE005674">
    <property type="protein sequence ID" value="AAN42003.1"/>
    <property type="molecule type" value="Genomic_DNA"/>
</dbReference>
<dbReference type="EMBL" id="AE014073">
    <property type="protein sequence ID" value="AAP15880.1"/>
    <property type="molecule type" value="Genomic_DNA"/>
</dbReference>
<dbReference type="RefSeq" id="NP_706296.1">
    <property type="nucleotide sequence ID" value="NC_004337.2"/>
</dbReference>
<dbReference type="RefSeq" id="WP_000934822.1">
    <property type="nucleotide sequence ID" value="NZ_WPGW01000023.1"/>
</dbReference>
<dbReference type="SMR" id="P0AG92"/>
<dbReference type="STRING" id="198214.SF0345"/>
<dbReference type="PaxDb" id="198214-SF0345"/>
<dbReference type="GeneID" id="1027665"/>
<dbReference type="GeneID" id="93777052"/>
<dbReference type="KEGG" id="sfl:SF0345"/>
<dbReference type="KEGG" id="sfx:S0353"/>
<dbReference type="PATRIC" id="fig|198214.7.peg.396"/>
<dbReference type="HOGENOM" id="CLU_007894_4_3_6"/>
<dbReference type="Proteomes" id="UP000001006">
    <property type="component" value="Chromosome"/>
</dbReference>
<dbReference type="Proteomes" id="UP000002673">
    <property type="component" value="Chromosome"/>
</dbReference>
<dbReference type="GO" id="GO:0005886">
    <property type="term" value="C:plasma membrane"/>
    <property type="evidence" value="ECO:0007669"/>
    <property type="project" value="UniProtKB-SubCell"/>
</dbReference>
<dbReference type="GO" id="GO:0015450">
    <property type="term" value="F:protein-transporting ATPase activity"/>
    <property type="evidence" value="ECO:0007669"/>
    <property type="project" value="InterPro"/>
</dbReference>
<dbReference type="GO" id="GO:0065002">
    <property type="term" value="P:intracellular protein transmembrane transport"/>
    <property type="evidence" value="ECO:0007669"/>
    <property type="project" value="UniProtKB-UniRule"/>
</dbReference>
<dbReference type="GO" id="GO:0006605">
    <property type="term" value="P:protein targeting"/>
    <property type="evidence" value="ECO:0007669"/>
    <property type="project" value="UniProtKB-UniRule"/>
</dbReference>
<dbReference type="GO" id="GO:0043952">
    <property type="term" value="P:protein transport by the Sec complex"/>
    <property type="evidence" value="ECO:0007669"/>
    <property type="project" value="UniProtKB-UniRule"/>
</dbReference>
<dbReference type="FunFam" id="1.20.1640.10:FF:000004">
    <property type="entry name" value="Protein translocase subunit SecD"/>
    <property type="match status" value="1"/>
</dbReference>
<dbReference type="FunFam" id="3.30.1360.200:FF:000001">
    <property type="entry name" value="Protein translocase subunit SecD"/>
    <property type="match status" value="1"/>
</dbReference>
<dbReference type="FunFam" id="3.30.70.3400:FF:000001">
    <property type="entry name" value="Protein translocase subunit SecD"/>
    <property type="match status" value="1"/>
</dbReference>
<dbReference type="FunFam" id="3.30.70.3400:FF:000002">
    <property type="entry name" value="Protein translocase subunit SecD"/>
    <property type="match status" value="1"/>
</dbReference>
<dbReference type="Gene3D" id="3.30.1360.200">
    <property type="match status" value="1"/>
</dbReference>
<dbReference type="Gene3D" id="3.30.70.260">
    <property type="match status" value="1"/>
</dbReference>
<dbReference type="Gene3D" id="3.30.70.3400">
    <property type="match status" value="2"/>
</dbReference>
<dbReference type="Gene3D" id="1.20.1640.10">
    <property type="entry name" value="Multidrug efflux transporter AcrB transmembrane domain"/>
    <property type="match status" value="1"/>
</dbReference>
<dbReference type="HAMAP" id="MF_01463_B">
    <property type="entry name" value="SecD_B"/>
    <property type="match status" value="1"/>
</dbReference>
<dbReference type="InterPro" id="IPR005791">
    <property type="entry name" value="SecD"/>
</dbReference>
<dbReference type="InterPro" id="IPR027398">
    <property type="entry name" value="SecD-TM"/>
</dbReference>
<dbReference type="InterPro" id="IPR022813">
    <property type="entry name" value="SecD/SecF_arch_bac"/>
</dbReference>
<dbReference type="InterPro" id="IPR022646">
    <property type="entry name" value="SecD/SecF_CS"/>
</dbReference>
<dbReference type="InterPro" id="IPR048631">
    <property type="entry name" value="SecD_1st"/>
</dbReference>
<dbReference type="InterPro" id="IPR048634">
    <property type="entry name" value="SecD_SecF_C"/>
</dbReference>
<dbReference type="InterPro" id="IPR055344">
    <property type="entry name" value="SecD_SecF_C_bact"/>
</dbReference>
<dbReference type="InterPro" id="IPR054384">
    <property type="entry name" value="SecDF_P1_head"/>
</dbReference>
<dbReference type="NCBIfam" id="TIGR00916">
    <property type="entry name" value="2A0604s01"/>
    <property type="match status" value="1"/>
</dbReference>
<dbReference type="NCBIfam" id="TIGR01129">
    <property type="entry name" value="secD"/>
    <property type="match status" value="1"/>
</dbReference>
<dbReference type="PANTHER" id="PTHR30081:SF1">
    <property type="entry name" value="PROTEIN TRANSLOCASE SUBUNIT SECD"/>
    <property type="match status" value="1"/>
</dbReference>
<dbReference type="PANTHER" id="PTHR30081">
    <property type="entry name" value="PROTEIN-EXPORT MEMBRANE PROTEIN SEC"/>
    <property type="match status" value="1"/>
</dbReference>
<dbReference type="Pfam" id="PF07549">
    <property type="entry name" value="Sec_GG"/>
    <property type="match status" value="1"/>
</dbReference>
<dbReference type="Pfam" id="PF13721">
    <property type="entry name" value="SecD-TM1"/>
    <property type="match status" value="1"/>
</dbReference>
<dbReference type="Pfam" id="PF21760">
    <property type="entry name" value="SecD_1st"/>
    <property type="match status" value="1"/>
</dbReference>
<dbReference type="Pfam" id="PF02355">
    <property type="entry name" value="SecD_SecF_C"/>
    <property type="match status" value="1"/>
</dbReference>
<dbReference type="Pfam" id="PF22599">
    <property type="entry name" value="SecDF_P1_head"/>
    <property type="match status" value="1"/>
</dbReference>
<dbReference type="SUPFAM" id="SSF82866">
    <property type="entry name" value="Multidrug efflux transporter AcrB transmembrane domain"/>
    <property type="match status" value="1"/>
</dbReference>
<name>SECD_SHIFL</name>